<accession>P58547</accession>
<gene>
    <name type="primary">MAT23</name>
</gene>
<dbReference type="PDB" id="1HA8">
    <property type="method" value="NMR"/>
    <property type="chains" value="A=1-51"/>
</dbReference>
<dbReference type="PDBsum" id="1HA8"/>
<dbReference type="BMRB" id="P58547"/>
<dbReference type="SMR" id="P58547"/>
<dbReference type="EvolutionaryTrace" id="P58547"/>
<dbReference type="GO" id="GO:0005576">
    <property type="term" value="C:extracellular region"/>
    <property type="evidence" value="ECO:0007669"/>
    <property type="project" value="UniProtKB-SubCell"/>
</dbReference>
<dbReference type="GO" id="GO:0000772">
    <property type="term" value="F:mating pheromone activity"/>
    <property type="evidence" value="ECO:0007669"/>
    <property type="project" value="InterPro"/>
</dbReference>
<dbReference type="Gene3D" id="1.10.10.190">
    <property type="match status" value="1"/>
</dbReference>
<dbReference type="InterPro" id="IPR016057">
    <property type="entry name" value="Pheromone_Er2/Er23_protoz"/>
</dbReference>
<dbReference type="InterPro" id="IPR016056">
    <property type="entry name" value="Pheromone_Er23_protoz"/>
</dbReference>
<dbReference type="SUPFAM" id="SSF69964">
    <property type="entry name" value="Pheromone ER-23"/>
    <property type="match status" value="1"/>
</dbReference>
<feature type="chain" id="PRO_0000186198" description="Mating pheromone Er-23">
    <location>
        <begin position="1"/>
        <end position="51"/>
    </location>
</feature>
<feature type="disulfide bond">
    <location>
        <begin position="3"/>
        <end position="24"/>
    </location>
</feature>
<feature type="disulfide bond">
    <location>
        <begin position="6"/>
        <end position="16"/>
    </location>
</feature>
<feature type="disulfide bond">
    <location>
        <begin position="13"/>
        <end position="47"/>
    </location>
</feature>
<feature type="disulfide bond">
    <location>
        <begin position="27"/>
        <end position="40"/>
    </location>
</feature>
<feature type="disulfide bond">
    <location>
        <begin position="35"/>
        <end position="51"/>
    </location>
</feature>
<feature type="helix" evidence="1">
    <location>
        <begin position="2"/>
        <end position="8"/>
    </location>
</feature>
<feature type="helix" evidence="1">
    <location>
        <begin position="14"/>
        <end position="17"/>
    </location>
</feature>
<feature type="turn" evidence="1">
    <location>
        <begin position="18"/>
        <end position="21"/>
    </location>
</feature>
<feature type="turn" evidence="1">
    <location>
        <begin position="24"/>
        <end position="28"/>
    </location>
</feature>
<feature type="strand" evidence="1">
    <location>
        <begin position="34"/>
        <end position="38"/>
    </location>
</feature>
<feature type="helix" evidence="1">
    <location>
        <begin position="41"/>
        <end position="47"/>
    </location>
</feature>
<keyword id="KW-0002">3D-structure</keyword>
<keyword id="KW-0903">Direct protein sequencing</keyword>
<keyword id="KW-1015">Disulfide bond</keyword>
<keyword id="KW-0588">Pheromone</keyword>
<keyword id="KW-0964">Secreted</keyword>
<proteinExistence type="evidence at protein level"/>
<name>MER23_EUPRA</name>
<organism>
    <name type="scientific">Euplotes raikovi</name>
    <dbReference type="NCBI Taxonomy" id="5938"/>
    <lineage>
        <taxon>Eukaryota</taxon>
        <taxon>Sar</taxon>
        <taxon>Alveolata</taxon>
        <taxon>Ciliophora</taxon>
        <taxon>Intramacronucleata</taxon>
        <taxon>Spirotrichea</taxon>
        <taxon>Hypotrichia</taxon>
        <taxon>Euplotida</taxon>
        <taxon>Euplotidae</taxon>
        <taxon>Euplotes</taxon>
    </lineage>
</organism>
<sequence length="51" mass="5105">GECEQCFSDGGDCTTCFNNGTGPCANCLAGYPAGCSNSDCTAFLSQCYGGC</sequence>
<comment type="function">
    <text>Mating ciliate pheromones (or gamones) are diffusible extracellular communication signals that distinguish different intraspecific classes of cells commonly referred to as 'mating types'. They prepare the latter for conjugation by changing their cell surface properties.</text>
</comment>
<comment type="subcellular location">
    <subcellularLocation>
        <location>Secreted</location>
    </subcellularLocation>
</comment>
<evidence type="ECO:0007829" key="1">
    <source>
        <dbReference type="PDB" id="1HA8"/>
    </source>
</evidence>
<protein>
    <recommendedName>
        <fullName>Mating pheromone Er-23</fullName>
    </recommendedName>
    <alternativeName>
        <fullName>Euplomone R23</fullName>
    </alternativeName>
</protein>
<reference key="1">
    <citation type="journal article" date="2002" name="J. Eukaryot. Microbiol.">
        <title>A structurally deviant member of the Euplotes raikovi pheromone family: Er-23.</title>
        <authorList>
            <person name="Di Giuseppe G."/>
            <person name="Miceli C."/>
            <person name="Zahn R."/>
            <person name="Damberger F."/>
            <person name="Wuethrich K."/>
            <person name="Luporini P."/>
        </authorList>
    </citation>
    <scope>PROTEIN SEQUENCE</scope>
</reference>
<reference key="2">
    <citation type="journal article" date="2001" name="J. Mol. Biol.">
        <title>NMR structure of the Euplotes raikovi pheromone Er-23 and identification of its five disulfide bonds.</title>
        <authorList>
            <person name="Zahn R."/>
            <person name="Damberger F."/>
            <person name="Ortenzi C."/>
            <person name="Luporini P."/>
            <person name="Wuethrich K."/>
        </authorList>
    </citation>
    <scope>STRUCTURE BY NMR</scope>
</reference>